<proteinExistence type="inferred from homology"/>
<keyword id="KW-0378">Hydrolase</keyword>
<keyword id="KW-1185">Reference proteome</keyword>
<accession>P96655</accession>
<accession>Q797J2</accession>
<protein>
    <recommendedName>
        <fullName>UPF0173 protein YddR</fullName>
        <ecNumber>3.-.-.-</ecNumber>
    </recommendedName>
</protein>
<dbReference type="EC" id="3.-.-.-"/>
<dbReference type="EMBL" id="AB001488">
    <property type="protein sequence ID" value="BAA19344.1"/>
    <property type="molecule type" value="Genomic_DNA"/>
</dbReference>
<dbReference type="EMBL" id="AL009126">
    <property type="protein sequence ID" value="CAB12315.1"/>
    <property type="molecule type" value="Genomic_DNA"/>
</dbReference>
<dbReference type="PIR" id="H69776">
    <property type="entry name" value="H69776"/>
</dbReference>
<dbReference type="RefSeq" id="NP_388389.1">
    <property type="nucleotide sequence ID" value="NC_000964.3"/>
</dbReference>
<dbReference type="RefSeq" id="WP_003234254.1">
    <property type="nucleotide sequence ID" value="NZ_OZ025638.1"/>
</dbReference>
<dbReference type="SMR" id="P96655"/>
<dbReference type="FunCoup" id="P96655">
    <property type="interactions" value="219"/>
</dbReference>
<dbReference type="STRING" id="224308.BSU05080"/>
<dbReference type="PaxDb" id="224308-BSU05080"/>
<dbReference type="EnsemblBacteria" id="CAB12315">
    <property type="protein sequence ID" value="CAB12315"/>
    <property type="gene ID" value="BSU_05080"/>
</dbReference>
<dbReference type="GeneID" id="939915"/>
<dbReference type="KEGG" id="bsu:BSU05080"/>
<dbReference type="PATRIC" id="fig|224308.179.peg.539"/>
<dbReference type="eggNOG" id="COG2220">
    <property type="taxonomic scope" value="Bacteria"/>
</dbReference>
<dbReference type="InParanoid" id="P96655"/>
<dbReference type="OrthoDB" id="9805728at2"/>
<dbReference type="PhylomeDB" id="P96655"/>
<dbReference type="BioCyc" id="BSUB:BSU05080-MONOMER"/>
<dbReference type="Proteomes" id="UP000001570">
    <property type="component" value="Chromosome"/>
</dbReference>
<dbReference type="GO" id="GO:0016787">
    <property type="term" value="F:hydrolase activity"/>
    <property type="evidence" value="ECO:0000318"/>
    <property type="project" value="GO_Central"/>
</dbReference>
<dbReference type="Gene3D" id="3.60.15.10">
    <property type="entry name" value="Ribonuclease Z/Hydroxyacylglutathione hydrolase-like"/>
    <property type="match status" value="1"/>
</dbReference>
<dbReference type="InterPro" id="IPR001279">
    <property type="entry name" value="Metallo-B-lactamas"/>
</dbReference>
<dbReference type="InterPro" id="IPR036866">
    <property type="entry name" value="RibonucZ/Hydroxyglut_hydro"/>
</dbReference>
<dbReference type="InterPro" id="IPR050114">
    <property type="entry name" value="UPF0173_UPF0282_UlaG_hydrolase"/>
</dbReference>
<dbReference type="PANTHER" id="PTHR43546:SF9">
    <property type="entry name" value="L-ASCORBATE-6-PHOSPHATE LACTONASE ULAG-RELATED"/>
    <property type="match status" value="1"/>
</dbReference>
<dbReference type="PANTHER" id="PTHR43546">
    <property type="entry name" value="UPF0173 METAL-DEPENDENT HYDROLASE MJ1163-RELATED"/>
    <property type="match status" value="1"/>
</dbReference>
<dbReference type="Pfam" id="PF12706">
    <property type="entry name" value="Lactamase_B_2"/>
    <property type="match status" value="1"/>
</dbReference>
<dbReference type="SUPFAM" id="SSF56281">
    <property type="entry name" value="Metallo-hydrolase/oxidoreductase"/>
    <property type="match status" value="1"/>
</dbReference>
<organism>
    <name type="scientific">Bacillus subtilis (strain 168)</name>
    <dbReference type="NCBI Taxonomy" id="224308"/>
    <lineage>
        <taxon>Bacteria</taxon>
        <taxon>Bacillati</taxon>
        <taxon>Bacillota</taxon>
        <taxon>Bacilli</taxon>
        <taxon>Bacillales</taxon>
        <taxon>Bacillaceae</taxon>
        <taxon>Bacillus</taxon>
    </lineage>
</organism>
<sequence>MNITQIRNATIVVKYANKKFLIDPMLAEKGTYATFPETIRQDLFNPLVSLPTSIDNILDGVDAVIVTHLHLDHFDDVAKNVLPKNIKMFVQNEADAKEVKASGFKNVEVLHQDTVFEGIQLVKTKGEHGRGEELLNLMGDVCGLVFKHPSEKVLYVAGDTVWYDAIEDEIHTHQPEIIVVNGGDNQRLDLGSLIMGKEDIYEVHKAAPHAKIISVHMEAVNHWTLSREELKNFSKEKGFSSNILVPEDGESYTF</sequence>
<feature type="chain" id="PRO_0000382898" description="UPF0173 protein YddR">
    <location>
        <begin position="1"/>
        <end position="254"/>
    </location>
</feature>
<gene>
    <name type="primary">yddR</name>
    <name type="ordered locus">BSU05080</name>
</gene>
<reference key="1">
    <citation type="journal article" date="1997" name="Mol. Gen. Genet.">
        <title>Characterization of an lrp-like (lrpC) gene from Bacillus subtilis.</title>
        <authorList>
            <person name="Beloin C."/>
            <person name="Ayora S."/>
            <person name="Exley R."/>
            <person name="Hirschbein L."/>
            <person name="Ogasawara N."/>
            <person name="Kasahara Y."/>
            <person name="Alonso J.C."/>
            <person name="Le Hegarat F."/>
        </authorList>
    </citation>
    <scope>NUCLEOTIDE SEQUENCE [GENOMIC DNA]</scope>
    <source>
        <strain>168</strain>
    </source>
</reference>
<reference key="2">
    <citation type="journal article" date="1997" name="Nature">
        <title>The complete genome sequence of the Gram-positive bacterium Bacillus subtilis.</title>
        <authorList>
            <person name="Kunst F."/>
            <person name="Ogasawara N."/>
            <person name="Moszer I."/>
            <person name="Albertini A.M."/>
            <person name="Alloni G."/>
            <person name="Azevedo V."/>
            <person name="Bertero M.G."/>
            <person name="Bessieres P."/>
            <person name="Bolotin A."/>
            <person name="Borchert S."/>
            <person name="Borriss R."/>
            <person name="Boursier L."/>
            <person name="Brans A."/>
            <person name="Braun M."/>
            <person name="Brignell S.C."/>
            <person name="Bron S."/>
            <person name="Brouillet S."/>
            <person name="Bruschi C.V."/>
            <person name="Caldwell B."/>
            <person name="Capuano V."/>
            <person name="Carter N.M."/>
            <person name="Choi S.-K."/>
            <person name="Codani J.-J."/>
            <person name="Connerton I.F."/>
            <person name="Cummings N.J."/>
            <person name="Daniel R.A."/>
            <person name="Denizot F."/>
            <person name="Devine K.M."/>
            <person name="Duesterhoeft A."/>
            <person name="Ehrlich S.D."/>
            <person name="Emmerson P.T."/>
            <person name="Entian K.-D."/>
            <person name="Errington J."/>
            <person name="Fabret C."/>
            <person name="Ferrari E."/>
            <person name="Foulger D."/>
            <person name="Fritz C."/>
            <person name="Fujita M."/>
            <person name="Fujita Y."/>
            <person name="Fuma S."/>
            <person name="Galizzi A."/>
            <person name="Galleron N."/>
            <person name="Ghim S.-Y."/>
            <person name="Glaser P."/>
            <person name="Goffeau A."/>
            <person name="Golightly E.J."/>
            <person name="Grandi G."/>
            <person name="Guiseppi G."/>
            <person name="Guy B.J."/>
            <person name="Haga K."/>
            <person name="Haiech J."/>
            <person name="Harwood C.R."/>
            <person name="Henaut A."/>
            <person name="Hilbert H."/>
            <person name="Holsappel S."/>
            <person name="Hosono S."/>
            <person name="Hullo M.-F."/>
            <person name="Itaya M."/>
            <person name="Jones L.-M."/>
            <person name="Joris B."/>
            <person name="Karamata D."/>
            <person name="Kasahara Y."/>
            <person name="Klaerr-Blanchard M."/>
            <person name="Klein C."/>
            <person name="Kobayashi Y."/>
            <person name="Koetter P."/>
            <person name="Koningstein G."/>
            <person name="Krogh S."/>
            <person name="Kumano M."/>
            <person name="Kurita K."/>
            <person name="Lapidus A."/>
            <person name="Lardinois S."/>
            <person name="Lauber J."/>
            <person name="Lazarevic V."/>
            <person name="Lee S.-M."/>
            <person name="Levine A."/>
            <person name="Liu H."/>
            <person name="Masuda S."/>
            <person name="Mauel C."/>
            <person name="Medigue C."/>
            <person name="Medina N."/>
            <person name="Mellado R.P."/>
            <person name="Mizuno M."/>
            <person name="Moestl D."/>
            <person name="Nakai S."/>
            <person name="Noback M."/>
            <person name="Noone D."/>
            <person name="O'Reilly M."/>
            <person name="Ogawa K."/>
            <person name="Ogiwara A."/>
            <person name="Oudega B."/>
            <person name="Park S.-H."/>
            <person name="Parro V."/>
            <person name="Pohl T.M."/>
            <person name="Portetelle D."/>
            <person name="Porwollik S."/>
            <person name="Prescott A.M."/>
            <person name="Presecan E."/>
            <person name="Pujic P."/>
            <person name="Purnelle B."/>
            <person name="Rapoport G."/>
            <person name="Rey M."/>
            <person name="Reynolds S."/>
            <person name="Rieger M."/>
            <person name="Rivolta C."/>
            <person name="Rocha E."/>
            <person name="Roche B."/>
            <person name="Rose M."/>
            <person name="Sadaie Y."/>
            <person name="Sato T."/>
            <person name="Scanlan E."/>
            <person name="Schleich S."/>
            <person name="Schroeter R."/>
            <person name="Scoffone F."/>
            <person name="Sekiguchi J."/>
            <person name="Sekowska A."/>
            <person name="Seror S.J."/>
            <person name="Serror P."/>
            <person name="Shin B.-S."/>
            <person name="Soldo B."/>
            <person name="Sorokin A."/>
            <person name="Tacconi E."/>
            <person name="Takagi T."/>
            <person name="Takahashi H."/>
            <person name="Takemaru K."/>
            <person name="Takeuchi M."/>
            <person name="Tamakoshi A."/>
            <person name="Tanaka T."/>
            <person name="Terpstra P."/>
            <person name="Tognoni A."/>
            <person name="Tosato V."/>
            <person name="Uchiyama S."/>
            <person name="Vandenbol M."/>
            <person name="Vannier F."/>
            <person name="Vassarotti A."/>
            <person name="Viari A."/>
            <person name="Wambutt R."/>
            <person name="Wedler E."/>
            <person name="Wedler H."/>
            <person name="Weitzenegger T."/>
            <person name="Winters P."/>
            <person name="Wipat A."/>
            <person name="Yamamoto H."/>
            <person name="Yamane K."/>
            <person name="Yasumoto K."/>
            <person name="Yata K."/>
            <person name="Yoshida K."/>
            <person name="Yoshikawa H.-F."/>
            <person name="Zumstein E."/>
            <person name="Yoshikawa H."/>
            <person name="Danchin A."/>
        </authorList>
    </citation>
    <scope>NUCLEOTIDE SEQUENCE [LARGE SCALE GENOMIC DNA]</scope>
    <source>
        <strain>168</strain>
    </source>
</reference>
<comment type="similarity">
    <text evidence="1">Belongs to the UPF0173 family.</text>
</comment>
<name>YDDR_BACSU</name>
<evidence type="ECO:0000305" key="1"/>